<dbReference type="EMBL" id="GG704915">
    <property type="protein sequence ID" value="EAS27940.2"/>
    <property type="molecule type" value="Genomic_DNA"/>
</dbReference>
<dbReference type="RefSeq" id="XP_001239523.2">
    <property type="nucleotide sequence ID" value="XM_001239522.2"/>
</dbReference>
<dbReference type="SMR" id="Q1DKL9"/>
<dbReference type="FunCoup" id="Q1DKL9">
    <property type="interactions" value="788"/>
</dbReference>
<dbReference type="STRING" id="246410.Q1DKL9"/>
<dbReference type="GeneID" id="4558253"/>
<dbReference type="KEGG" id="cim:CIMG_09144"/>
<dbReference type="VEuPathDB" id="FungiDB:CIMG_09144"/>
<dbReference type="InParanoid" id="Q1DKL9"/>
<dbReference type="OMA" id="VQYVNCH"/>
<dbReference type="OrthoDB" id="258143at2759"/>
<dbReference type="Proteomes" id="UP000001261">
    <property type="component" value="Unassembled WGS sequence"/>
</dbReference>
<dbReference type="GO" id="GO:0005849">
    <property type="term" value="C:mRNA cleavage factor complex"/>
    <property type="evidence" value="ECO:0007669"/>
    <property type="project" value="UniProtKB-UniRule"/>
</dbReference>
<dbReference type="GO" id="GO:0005524">
    <property type="term" value="F:ATP binding"/>
    <property type="evidence" value="ECO:0007669"/>
    <property type="project" value="UniProtKB-UniRule"/>
</dbReference>
<dbReference type="GO" id="GO:0051731">
    <property type="term" value="F:polynucleotide 5'-hydroxyl-kinase activity"/>
    <property type="evidence" value="ECO:0007669"/>
    <property type="project" value="InterPro"/>
</dbReference>
<dbReference type="GO" id="GO:0031124">
    <property type="term" value="P:mRNA 3'-end processing"/>
    <property type="evidence" value="ECO:0007669"/>
    <property type="project" value="UniProtKB-UniRule"/>
</dbReference>
<dbReference type="GO" id="GO:0006388">
    <property type="term" value="P:tRNA splicing, via endonucleolytic cleavage and ligation"/>
    <property type="evidence" value="ECO:0007669"/>
    <property type="project" value="TreeGrafter"/>
</dbReference>
<dbReference type="FunFam" id="3.40.50.300:FF:002095">
    <property type="entry name" value="mRNA cleavage and polyadenylation factor clp1"/>
    <property type="match status" value="1"/>
</dbReference>
<dbReference type="FunFam" id="2.60.120.1030:FF:000001">
    <property type="entry name" value="Protein CLP1 homolog 5"/>
    <property type="match status" value="1"/>
</dbReference>
<dbReference type="Gene3D" id="2.60.120.1030">
    <property type="entry name" value="Clp1, DNA binding domain"/>
    <property type="match status" value="1"/>
</dbReference>
<dbReference type="Gene3D" id="3.40.50.300">
    <property type="entry name" value="P-loop containing nucleotide triphosphate hydrolases"/>
    <property type="match status" value="1"/>
</dbReference>
<dbReference type="Gene3D" id="2.40.30.330">
    <property type="entry name" value="Pre-mRNA cleavage complex subunit Clp1, C-terminal domain"/>
    <property type="match status" value="1"/>
</dbReference>
<dbReference type="HAMAP" id="MF_03035">
    <property type="entry name" value="Clp1"/>
    <property type="match status" value="1"/>
</dbReference>
<dbReference type="InterPro" id="IPR028606">
    <property type="entry name" value="Clp1"/>
</dbReference>
<dbReference type="InterPro" id="IPR045116">
    <property type="entry name" value="Clp1/Grc3"/>
</dbReference>
<dbReference type="InterPro" id="IPR010655">
    <property type="entry name" value="Clp1_C"/>
</dbReference>
<dbReference type="InterPro" id="IPR038238">
    <property type="entry name" value="Clp1_C_sf"/>
</dbReference>
<dbReference type="InterPro" id="IPR032324">
    <property type="entry name" value="Clp1_N"/>
</dbReference>
<dbReference type="InterPro" id="IPR038239">
    <property type="entry name" value="Clp1_N_sf"/>
</dbReference>
<dbReference type="InterPro" id="IPR032319">
    <property type="entry name" value="CLP1_P"/>
</dbReference>
<dbReference type="InterPro" id="IPR027417">
    <property type="entry name" value="P-loop_NTPase"/>
</dbReference>
<dbReference type="PANTHER" id="PTHR12755">
    <property type="entry name" value="CLEAVAGE/POLYADENYLATION FACTOR IA SUBUNIT CLP1P"/>
    <property type="match status" value="1"/>
</dbReference>
<dbReference type="PANTHER" id="PTHR12755:SF6">
    <property type="entry name" value="POLYRIBONUCLEOTIDE 5'-HYDROXYL-KINASE CLP1"/>
    <property type="match status" value="1"/>
</dbReference>
<dbReference type="Pfam" id="PF06807">
    <property type="entry name" value="Clp1"/>
    <property type="match status" value="1"/>
</dbReference>
<dbReference type="Pfam" id="PF16573">
    <property type="entry name" value="CLP1_N"/>
    <property type="match status" value="1"/>
</dbReference>
<dbReference type="Pfam" id="PF16575">
    <property type="entry name" value="CLP1_P"/>
    <property type="match status" value="1"/>
</dbReference>
<dbReference type="SUPFAM" id="SSF52540">
    <property type="entry name" value="P-loop containing nucleoside triphosphate hydrolases"/>
    <property type="match status" value="1"/>
</dbReference>
<protein>
    <recommendedName>
        <fullName evidence="1">mRNA cleavage and polyadenylation factor CLP1</fullName>
    </recommendedName>
</protein>
<comment type="function">
    <text evidence="1">Required for endonucleolytic cleavage during polyadenylation-dependent pre-mRNA 3'-end formation.</text>
</comment>
<comment type="subunit">
    <text evidence="1">Component of a pre-mRNA cleavage factor complex. Interacts directly with PCF11.</text>
</comment>
<comment type="subcellular location">
    <subcellularLocation>
        <location evidence="1">Nucleus</location>
    </subcellularLocation>
</comment>
<comment type="similarity">
    <text evidence="1">Belongs to the Clp1 family. Clp1 subfamily.</text>
</comment>
<comment type="caution">
    <text evidence="3">May lack the polyribonucleotide 5'-hydroxyl-kinase and polynucleotide 5'-hydroxyl-kinase activities that are characteristic of the human ortholog.</text>
</comment>
<accession>Q1DKL9</accession>
<accession>A0A0D6K9M3</accession>
<accession>J3K2D3</accession>
<feature type="chain" id="PRO_0000375202" description="mRNA cleavage and polyadenylation factor CLP1">
    <location>
        <begin position="1"/>
        <end position="562"/>
    </location>
</feature>
<feature type="region of interest" description="Disordered" evidence="2">
    <location>
        <begin position="1"/>
        <end position="27"/>
    </location>
</feature>
<feature type="region of interest" description="Disordered" evidence="2">
    <location>
        <begin position="415"/>
        <end position="483"/>
    </location>
</feature>
<feature type="compositionally biased region" description="Low complexity" evidence="2">
    <location>
        <begin position="445"/>
        <end position="479"/>
    </location>
</feature>
<feature type="binding site" evidence="1">
    <location>
        <position position="32"/>
    </location>
    <ligand>
        <name>ATP</name>
        <dbReference type="ChEBI" id="CHEBI:30616"/>
    </ligand>
</feature>
<feature type="binding site" evidence="1">
    <location>
        <position position="71"/>
    </location>
    <ligand>
        <name>ATP</name>
        <dbReference type="ChEBI" id="CHEBI:30616"/>
    </ligand>
</feature>
<feature type="binding site" evidence="1">
    <location>
        <begin position="154"/>
        <end position="159"/>
    </location>
    <ligand>
        <name>ATP</name>
        <dbReference type="ChEBI" id="CHEBI:30616"/>
    </ligand>
</feature>
<organism>
    <name type="scientific">Coccidioides immitis (strain RS)</name>
    <name type="common">Valley fever fungus</name>
    <dbReference type="NCBI Taxonomy" id="246410"/>
    <lineage>
        <taxon>Eukaryota</taxon>
        <taxon>Fungi</taxon>
        <taxon>Dikarya</taxon>
        <taxon>Ascomycota</taxon>
        <taxon>Pezizomycotina</taxon>
        <taxon>Eurotiomycetes</taxon>
        <taxon>Eurotiomycetidae</taxon>
        <taxon>Onygenales</taxon>
        <taxon>Onygenaceae</taxon>
        <taxon>Coccidioides</taxon>
    </lineage>
</organism>
<evidence type="ECO:0000255" key="1">
    <source>
        <dbReference type="HAMAP-Rule" id="MF_03035"/>
    </source>
</evidence>
<evidence type="ECO:0000256" key="2">
    <source>
        <dbReference type="SAM" id="MobiDB-lite"/>
    </source>
</evidence>
<evidence type="ECO:0000305" key="3"/>
<proteinExistence type="inferred from homology"/>
<gene>
    <name evidence="1" type="primary">CLP1</name>
    <name type="ORF">CIMG_09144</name>
</gene>
<keyword id="KW-0067">ATP-binding</keyword>
<keyword id="KW-0507">mRNA processing</keyword>
<keyword id="KW-0547">Nucleotide-binding</keyword>
<keyword id="KW-0539">Nucleus</keyword>
<keyword id="KW-1185">Reference proteome</keyword>
<name>CLP1_COCIM</name>
<sequence length="562" mass="59183">MSLPGLELSQQPIEARRAPPQPTQISLPKGSEWRFEVAFGNTTRVKLLAGTAELFGTELATSQTYTFSGTKAAIYTWHGCTLEVGAGDPVPIGPVGSAPVPPGPGNGGCQVEYIAEETPMAEYANVHFALETMRHDAKAAGRDGPRVLILGPEDAGKTSLAKILTGYATKMGRQPLVVNLDPSEGMLSVPGALTATAFRSMIDVEEGWGSSPMSGPSPIPVKLPLVYFYGLPACLDGDGSYYKAIVSRLALAVTGRMAEDSDAREAGVIIDTPGIIGQGKGASEDVIHHIVTEFSISTILVIGSERLYSTMVKNYDNKPIATSATAAASDERISVVKLTKSGGCVDRDATFMKYVRESQIRSYFFGSPVPSTASSALSLSSTTTGTTMTLSPHTSQVDFNSLSIYSITIATEGEEDEYDPSKFDSFLPGGHEENDHNTSLTGTTSLQPPSGLLPGLRSELPSATTGFPSASTSSTTPFTNLPSPAPMSLANTLLAITNAAPNASLDEVRDASIMGFIYIADVDEKKGQGGKLRLLAPVGGRVPNRAMIWGRKWPGEVVGLIG</sequence>
<reference key="1">
    <citation type="journal article" date="2009" name="Genome Res.">
        <title>Comparative genomic analyses of the human fungal pathogens Coccidioides and their relatives.</title>
        <authorList>
            <person name="Sharpton T.J."/>
            <person name="Stajich J.E."/>
            <person name="Rounsley S.D."/>
            <person name="Gardner M.J."/>
            <person name="Wortman J.R."/>
            <person name="Jordar V.S."/>
            <person name="Maiti R."/>
            <person name="Kodira C.D."/>
            <person name="Neafsey D.E."/>
            <person name="Zeng Q."/>
            <person name="Hung C.-Y."/>
            <person name="McMahan C."/>
            <person name="Muszewska A."/>
            <person name="Grynberg M."/>
            <person name="Mandel M.A."/>
            <person name="Kellner E.M."/>
            <person name="Barker B.M."/>
            <person name="Galgiani J.N."/>
            <person name="Orbach M.J."/>
            <person name="Kirkland T.N."/>
            <person name="Cole G.T."/>
            <person name="Henn M.R."/>
            <person name="Birren B.W."/>
            <person name="Taylor J.W."/>
        </authorList>
    </citation>
    <scope>NUCLEOTIDE SEQUENCE [LARGE SCALE GENOMIC DNA]</scope>
    <source>
        <strain>RS</strain>
    </source>
</reference>
<reference key="2">
    <citation type="journal article" date="2010" name="Genome Res.">
        <title>Population genomic sequencing of Coccidioides fungi reveals recent hybridization and transposon control.</title>
        <authorList>
            <person name="Neafsey D.E."/>
            <person name="Barker B.M."/>
            <person name="Sharpton T.J."/>
            <person name="Stajich J.E."/>
            <person name="Park D.J."/>
            <person name="Whiston E."/>
            <person name="Hung C.-Y."/>
            <person name="McMahan C."/>
            <person name="White J."/>
            <person name="Sykes S."/>
            <person name="Heiman D."/>
            <person name="Young S."/>
            <person name="Zeng Q."/>
            <person name="Abouelleil A."/>
            <person name="Aftuck L."/>
            <person name="Bessette D."/>
            <person name="Brown A."/>
            <person name="FitzGerald M."/>
            <person name="Lui A."/>
            <person name="Macdonald J.P."/>
            <person name="Priest M."/>
            <person name="Orbach M.J."/>
            <person name="Galgiani J.N."/>
            <person name="Kirkland T.N."/>
            <person name="Cole G.T."/>
            <person name="Birren B.W."/>
            <person name="Henn M.R."/>
            <person name="Taylor J.W."/>
            <person name="Rounsley S.D."/>
        </authorList>
    </citation>
    <scope>GENOME REANNOTATION</scope>
    <source>
        <strain>RS</strain>
    </source>
</reference>